<name>ACTD_STRPU</name>
<accession>P69005</accession>
<accession>P02573</accession>
<accession>P10991</accession>
<feature type="propeptide" id="PRO_0000000728" description="Removed in mature form">
    <location>
        <begin position="1"/>
        <end position="2"/>
    </location>
</feature>
<feature type="chain" id="PRO_0000000729" description="Actin, cytoskeletal 2B">
    <location>
        <begin position="3"/>
        <end position="376"/>
    </location>
</feature>
<feature type="modified residue" description="N-acetylaspartate" evidence="1">
    <location>
        <position position="3"/>
    </location>
</feature>
<feature type="sequence conflict" description="In Ref. 2; AAA30034." evidence="3" ref="2">
    <original>A</original>
    <variation>C</variation>
    <location>
        <position position="258"/>
    </location>
</feature>
<protein>
    <recommendedName>
        <fullName>Actin, cytoskeletal 2B</fullName>
        <ecNumber evidence="2">3.6.4.-</ecNumber>
    </recommendedName>
    <alternativeName>
        <fullName>Actin, cytoskeletal IIB</fullName>
    </alternativeName>
</protein>
<proteinExistence type="evidence at transcript level"/>
<organism>
    <name type="scientific">Strongylocentrotus purpuratus</name>
    <name type="common">Purple sea urchin</name>
    <dbReference type="NCBI Taxonomy" id="7668"/>
    <lineage>
        <taxon>Eukaryota</taxon>
        <taxon>Metazoa</taxon>
        <taxon>Echinodermata</taxon>
        <taxon>Eleutherozoa</taxon>
        <taxon>Echinozoa</taxon>
        <taxon>Echinoidea</taxon>
        <taxon>Euechinoidea</taxon>
        <taxon>Echinacea</taxon>
        <taxon>Camarodonta</taxon>
        <taxon>Echinidea</taxon>
        <taxon>Strongylocentrotidae</taxon>
        <taxon>Strongylocentrotus</taxon>
    </lineage>
</organism>
<comment type="function">
    <text>Actins are highly conserved proteins that are involved in various types of cell motility and are ubiquitously expressed in all eukaryotic cells.</text>
</comment>
<comment type="catalytic activity">
    <reaction evidence="2">
        <text>ATP + H2O = ADP + phosphate + H(+)</text>
        <dbReference type="Rhea" id="RHEA:13065"/>
        <dbReference type="ChEBI" id="CHEBI:15377"/>
        <dbReference type="ChEBI" id="CHEBI:15378"/>
        <dbReference type="ChEBI" id="CHEBI:30616"/>
        <dbReference type="ChEBI" id="CHEBI:43474"/>
        <dbReference type="ChEBI" id="CHEBI:456216"/>
    </reaction>
</comment>
<comment type="subcellular location">
    <subcellularLocation>
        <location>Cytoplasm</location>
    </subcellularLocation>
    <subcellularLocation>
        <location>Cytoplasm</location>
        <location>Cytoskeleton</location>
    </subcellularLocation>
</comment>
<comment type="developmental stage">
    <text>Thought to be expressed early in embryogenesis.</text>
</comment>
<comment type="similarity">
    <text evidence="3">Belongs to the actin family.</text>
</comment>
<keyword id="KW-0007">Acetylation</keyword>
<keyword id="KW-0067">ATP-binding</keyword>
<keyword id="KW-0963">Cytoplasm</keyword>
<keyword id="KW-0206">Cytoskeleton</keyword>
<keyword id="KW-0378">Hydrolase</keyword>
<keyword id="KW-0547">Nucleotide-binding</keyword>
<keyword id="KW-1185">Reference proteome</keyword>
<gene>
    <name type="primary">CYIIB</name>
    <name type="synonym">SPEC3</name>
</gene>
<sequence>MCDDDVAALVIDNGSGMVKAGFAGDDAPRAVFPSIVGRPRHQGVMVGMGQKDSYVGDEAQSKRGILTLKYPIEHGIVTNWDDMEKIWHHTFYNELRVAPEEHPVLLTEAPLNPKANREKMTQIMFETFNSPAMYVAIQAVLSLYASGRTTGIVFDSGDGVSHTVPIYEGYALPHAILRLDLAGRDLTDYLMKILTERGYSFTTTAEREIVRDIKEKLCYVALDFEQEMQTAASSSSLEKSYELPDGQVITIGNERFRAPEALFQPAFLGMESAGIHETCYNSIMKCDVDIRKDLYANTVLSGGSTMFPGIADRMQKEITALAPPTMKIKIIAPPERKYSVWIGGSILASLSTFQQMWISKQEYDESGPSIVHRKCF</sequence>
<dbReference type="EC" id="3.6.4.-" evidence="2"/>
<dbReference type="EMBL" id="M35323">
    <property type="protein sequence ID" value="AAA30042.1"/>
    <property type="molecule type" value="Genomic_DNA"/>
</dbReference>
<dbReference type="EMBL" id="J01202">
    <property type="protein sequence ID" value="AAA30034.1"/>
    <property type="molecule type" value="Genomic_DNA"/>
</dbReference>
<dbReference type="PIR" id="A03001">
    <property type="entry name" value="ATURS"/>
</dbReference>
<dbReference type="RefSeq" id="NP_999693.1">
    <property type="nucleotide sequence ID" value="NM_214528.1"/>
</dbReference>
<dbReference type="SMR" id="P69005"/>
<dbReference type="FunCoup" id="P69005">
    <property type="interactions" value="1849"/>
</dbReference>
<dbReference type="STRING" id="7668.P69005"/>
<dbReference type="EnsemblMetazoa" id="NM_001037157">
    <property type="protein sequence ID" value="NP_001032234"/>
    <property type="gene ID" value="GeneID_373190"/>
</dbReference>
<dbReference type="EnsemblMetazoa" id="XM_011665467">
    <property type="protein sequence ID" value="XP_011663769"/>
    <property type="gene ID" value="GeneID_373190"/>
</dbReference>
<dbReference type="EnsemblMetazoa" id="XM_030997000">
    <property type="protein sequence ID" value="XP_030852860"/>
    <property type="gene ID" value="GeneID_373190"/>
</dbReference>
<dbReference type="EnsemblMetazoa" id="XM_030997550">
    <property type="protein sequence ID" value="XP_030853410"/>
    <property type="gene ID" value="LOC115929160"/>
</dbReference>
<dbReference type="GeneID" id="373297"/>
<dbReference type="KEGG" id="spu:115917875"/>
<dbReference type="KEGG" id="spu:373190"/>
<dbReference type="KEGG" id="spu:373192"/>
<dbReference type="CTD" id="373190"/>
<dbReference type="CTD" id="373297"/>
<dbReference type="eggNOG" id="KOG0676">
    <property type="taxonomic scope" value="Eukaryota"/>
</dbReference>
<dbReference type="HOGENOM" id="CLU_027965_0_2_1"/>
<dbReference type="InParanoid" id="P69005"/>
<dbReference type="OMA" id="NEMQVAN"/>
<dbReference type="OrthoDB" id="10249208at2759"/>
<dbReference type="PhylomeDB" id="P69005"/>
<dbReference type="Proteomes" id="UP000007110">
    <property type="component" value="Unassembled WGS sequence"/>
</dbReference>
<dbReference type="GO" id="GO:0005737">
    <property type="term" value="C:cytoplasm"/>
    <property type="evidence" value="ECO:0007669"/>
    <property type="project" value="UniProtKB-SubCell"/>
</dbReference>
<dbReference type="GO" id="GO:0005856">
    <property type="term" value="C:cytoskeleton"/>
    <property type="evidence" value="ECO:0007669"/>
    <property type="project" value="UniProtKB-SubCell"/>
</dbReference>
<dbReference type="GO" id="GO:0005524">
    <property type="term" value="F:ATP binding"/>
    <property type="evidence" value="ECO:0007669"/>
    <property type="project" value="UniProtKB-KW"/>
</dbReference>
<dbReference type="GO" id="GO:0016787">
    <property type="term" value="F:hydrolase activity"/>
    <property type="evidence" value="ECO:0007669"/>
    <property type="project" value="UniProtKB-KW"/>
</dbReference>
<dbReference type="CDD" id="cd10224">
    <property type="entry name" value="ASKHA_NBD_actin"/>
    <property type="match status" value="1"/>
</dbReference>
<dbReference type="FunFam" id="3.30.420.40:FF:000131">
    <property type="entry name" value="Actin, alpha skeletal muscle"/>
    <property type="match status" value="1"/>
</dbReference>
<dbReference type="FunFam" id="3.30.420.40:FF:000291">
    <property type="entry name" value="Actin, alpha skeletal muscle"/>
    <property type="match status" value="1"/>
</dbReference>
<dbReference type="FunFam" id="3.90.640.10:FF:000047">
    <property type="entry name" value="Actin, alpha skeletal muscle"/>
    <property type="match status" value="1"/>
</dbReference>
<dbReference type="FunFam" id="3.30.420.40:FF:000058">
    <property type="entry name" value="Putative actin-related protein 5"/>
    <property type="match status" value="1"/>
</dbReference>
<dbReference type="Gene3D" id="3.30.420.40">
    <property type="match status" value="2"/>
</dbReference>
<dbReference type="Gene3D" id="3.90.640.10">
    <property type="entry name" value="Actin, Chain A, domain 4"/>
    <property type="match status" value="1"/>
</dbReference>
<dbReference type="InterPro" id="IPR004000">
    <property type="entry name" value="Actin"/>
</dbReference>
<dbReference type="InterPro" id="IPR020902">
    <property type="entry name" value="Actin/actin-like_CS"/>
</dbReference>
<dbReference type="InterPro" id="IPR004001">
    <property type="entry name" value="Actin_CS"/>
</dbReference>
<dbReference type="InterPro" id="IPR043129">
    <property type="entry name" value="ATPase_NBD"/>
</dbReference>
<dbReference type="PANTHER" id="PTHR11937">
    <property type="entry name" value="ACTIN"/>
    <property type="match status" value="1"/>
</dbReference>
<dbReference type="Pfam" id="PF00022">
    <property type="entry name" value="Actin"/>
    <property type="match status" value="1"/>
</dbReference>
<dbReference type="PRINTS" id="PR00190">
    <property type="entry name" value="ACTIN"/>
</dbReference>
<dbReference type="SMART" id="SM00268">
    <property type="entry name" value="ACTIN"/>
    <property type="match status" value="1"/>
</dbReference>
<dbReference type="SUPFAM" id="SSF53067">
    <property type="entry name" value="Actin-like ATPase domain"/>
    <property type="match status" value="2"/>
</dbReference>
<dbReference type="PROSITE" id="PS00406">
    <property type="entry name" value="ACTINS_1"/>
    <property type="match status" value="1"/>
</dbReference>
<dbReference type="PROSITE" id="PS00432">
    <property type="entry name" value="ACTINS_2"/>
    <property type="match status" value="1"/>
</dbReference>
<dbReference type="PROSITE" id="PS01132">
    <property type="entry name" value="ACTINS_ACT_LIKE"/>
    <property type="match status" value="1"/>
</dbReference>
<evidence type="ECO:0000250" key="1"/>
<evidence type="ECO:0000250" key="2">
    <source>
        <dbReference type="UniProtKB" id="P68137"/>
    </source>
</evidence>
<evidence type="ECO:0000305" key="3"/>
<reference key="1">
    <citation type="journal article" date="1988" name="J. Mol. Evol.">
        <title>DNA sequence analysis and structural relationships among the cytoskeletal actin genes of the sea urchin Strongylocentrotus purpuratus.</title>
        <authorList>
            <person name="Durica D.S."/>
            <person name="Garza D."/>
            <person name="Restrepo M.A."/>
            <person name="Hryniewicz M.M."/>
        </authorList>
    </citation>
    <scope>NUCLEOTIDE SEQUENCE [GENOMIC DNA]</scope>
</reference>
<reference key="2">
    <citation type="journal article" date="1982" name="Nucleic Acids Res.">
        <title>Complete nucleotide sequence of a sea urchin actin gene.</title>
        <authorList>
            <person name="Cooper A.D."/>
            <person name="Crain W.R. Jr."/>
        </authorList>
    </citation>
    <scope>NUCLEOTIDE SEQUENCE [GENOMIC DNA]</scope>
</reference>